<gene>
    <name evidence="1" type="primary">lacG</name>
    <name type="ordered locus">SGO_1512</name>
</gene>
<proteinExistence type="inferred from homology"/>
<keyword id="KW-0326">Glycosidase</keyword>
<keyword id="KW-0378">Hydrolase</keyword>
<keyword id="KW-1185">Reference proteome</keyword>
<organism>
    <name type="scientific">Streptococcus gordonii (strain Challis / ATCC 35105 / BCRC 15272 / CH1 / DL1 / V288)</name>
    <dbReference type="NCBI Taxonomy" id="467705"/>
    <lineage>
        <taxon>Bacteria</taxon>
        <taxon>Bacillati</taxon>
        <taxon>Bacillota</taxon>
        <taxon>Bacilli</taxon>
        <taxon>Lactobacillales</taxon>
        <taxon>Streptococcaceae</taxon>
        <taxon>Streptococcus</taxon>
    </lineage>
</organism>
<sequence length="468" mass="54111">MTKSLPKDFIFGGATAAYQAEGATHTDGKGPVAWDKYLEDNYWYTAEPASDFYHKYPVDLKLAEEYGVNGIRISIAWSRIFPTGYGEVNPKGVEFYHNLFAECHKRHVEPFVTLHHFDTPEALHSNGDFLNRDNIEHFVDYAAFCFEEFPEVRYWTTFNEIGPIGDGQYLVGKFPPGIQYDLAKVFQSHHNMMVSHARAVKLYKDKGYKGEIGVVHALPTKYPYDPENPADVRAAELEDIIHNKFILDATYLGHYSDVTLAGVNHILKVNGGQLDLRDEDFAALEAAKDLNDFLGINYYMSDWMRDFDGETEIIHNGKGEKGSSKYQIKGVGRRESPTHIPKTDWDWIIYPQGLYDQIMRIKKDYPNYKKIYITENGLGYKDEFVDNTVYDDARIDYVKQHLEVLSDAIADGANVKGYFIWSLMDVFSWSNGYEKRYGLFYVDFETQERYPKKSAHWYRRLAETQMIE</sequence>
<reference key="1">
    <citation type="submission" date="1999-12" db="EMBL/GenBank/DDBJ databases">
        <title>Identification of new intergenic and intragenic integration sites for foreign gene expression in recombinant Streptococcus gordonii strains.</title>
        <authorList>
            <person name="Bolken T.C."/>
            <person name="Franke C.A."/>
            <person name="Hruby D.E."/>
            <person name="Zeller G.O."/>
        </authorList>
    </citation>
    <scope>NUCLEOTIDE SEQUENCE [GENOMIC DNA]</scope>
</reference>
<reference key="2">
    <citation type="journal article" date="2007" name="J. Bacteriol.">
        <title>Genome-wide transcriptional changes in Streptococcus gordonii in response to competence signaling peptide.</title>
        <authorList>
            <person name="Vickerman M.M."/>
            <person name="Iobst S."/>
            <person name="Jesionowski A.M."/>
            <person name="Gill S.R."/>
        </authorList>
    </citation>
    <scope>NUCLEOTIDE SEQUENCE [LARGE SCALE GENOMIC DNA]</scope>
    <source>
        <strain>Challis / ATCC 35105 / BCRC 15272 / CH1 / DL1 / V288</strain>
    </source>
</reference>
<evidence type="ECO:0000255" key="1">
    <source>
        <dbReference type="HAMAP-Rule" id="MF_01574"/>
    </source>
</evidence>
<evidence type="ECO:0000305" key="2"/>
<name>LACG_STRGC</name>
<accession>Q9EV38</accession>
<accession>A8AYD1</accession>
<comment type="catalytic activity">
    <reaction evidence="1">
        <text>a 6-phospho-beta-D-galactoside + H2O = D-galactose 6-phosphate + an alcohol</text>
        <dbReference type="Rhea" id="RHEA:24568"/>
        <dbReference type="ChEBI" id="CHEBI:15377"/>
        <dbReference type="ChEBI" id="CHEBI:30879"/>
        <dbReference type="ChEBI" id="CHEBI:58534"/>
        <dbReference type="ChEBI" id="CHEBI:91004"/>
        <dbReference type="EC" id="3.2.1.85"/>
    </reaction>
</comment>
<comment type="pathway">
    <text evidence="1">Carbohydrate metabolism; lactose degradation; D-galactose 6-phosphate and beta-D-glucose from lactose 6-phosphate: step 1/1.</text>
</comment>
<comment type="similarity">
    <text evidence="1">Belongs to the glycosyl hydrolase 1 family.</text>
</comment>
<feature type="chain" id="PRO_0000260729" description="6-phospho-beta-galactosidase">
    <location>
        <begin position="1"/>
        <end position="468"/>
    </location>
</feature>
<feature type="active site" description="Proton donor" evidence="1">
    <location>
        <position position="160"/>
    </location>
</feature>
<feature type="active site" description="Nucleophile" evidence="1">
    <location>
        <position position="375"/>
    </location>
</feature>
<feature type="binding site" evidence="1">
    <location>
        <position position="19"/>
    </location>
    <ligand>
        <name>D-galactose 6-phosphate</name>
        <dbReference type="ChEBI" id="CHEBI:91004"/>
    </ligand>
</feature>
<feature type="binding site" evidence="1">
    <location>
        <position position="116"/>
    </location>
    <ligand>
        <name>D-galactose 6-phosphate</name>
        <dbReference type="ChEBI" id="CHEBI:91004"/>
    </ligand>
</feature>
<feature type="binding site" evidence="1">
    <location>
        <position position="159"/>
    </location>
    <ligand>
        <name>D-galactose 6-phosphate</name>
        <dbReference type="ChEBI" id="CHEBI:91004"/>
    </ligand>
</feature>
<feature type="binding site" evidence="1">
    <location>
        <position position="160"/>
    </location>
    <ligand>
        <name>D-galactose 6-phosphate</name>
        <dbReference type="ChEBI" id="CHEBI:91004"/>
    </ligand>
</feature>
<feature type="binding site" evidence="1">
    <location>
        <position position="297"/>
    </location>
    <ligand>
        <name>D-galactose 6-phosphate</name>
        <dbReference type="ChEBI" id="CHEBI:91004"/>
    </ligand>
</feature>
<feature type="binding site" evidence="1">
    <location>
        <position position="428"/>
    </location>
    <ligand>
        <name>D-galactose 6-phosphate</name>
        <dbReference type="ChEBI" id="CHEBI:91004"/>
    </ligand>
</feature>
<feature type="binding site" evidence="1">
    <location>
        <position position="429"/>
    </location>
    <ligand>
        <name>D-galactose 6-phosphate</name>
        <dbReference type="ChEBI" id="CHEBI:91004"/>
    </ligand>
</feature>
<feature type="binding site" evidence="1">
    <location>
        <position position="435"/>
    </location>
    <ligand>
        <name>D-galactose 6-phosphate</name>
        <dbReference type="ChEBI" id="CHEBI:91004"/>
    </ligand>
</feature>
<feature type="binding site" evidence="1">
    <location>
        <position position="437"/>
    </location>
    <ligand>
        <name>D-galactose 6-phosphate</name>
        <dbReference type="ChEBI" id="CHEBI:91004"/>
    </ligand>
</feature>
<feature type="sequence conflict" description="In Ref. 1; AAG39001." evidence="2" ref="1">
    <original>RR</original>
    <variation>KK</variation>
    <location>
        <begin position="459"/>
        <end position="460"/>
    </location>
</feature>
<dbReference type="EC" id="3.2.1.85" evidence="1"/>
<dbReference type="EMBL" id="AF210773">
    <property type="protein sequence ID" value="AAG39001.1"/>
    <property type="molecule type" value="Genomic_DNA"/>
</dbReference>
<dbReference type="EMBL" id="CP000725">
    <property type="protein sequence ID" value="ABV10357.1"/>
    <property type="molecule type" value="Genomic_DNA"/>
</dbReference>
<dbReference type="RefSeq" id="WP_012130586.1">
    <property type="nucleotide sequence ID" value="NC_009785.1"/>
</dbReference>
<dbReference type="SMR" id="Q9EV38"/>
<dbReference type="STRING" id="467705.SGO_1512"/>
<dbReference type="CAZy" id="GH1">
    <property type="family name" value="Glycoside Hydrolase Family 1"/>
</dbReference>
<dbReference type="KEGG" id="sgo:SGO_1512"/>
<dbReference type="eggNOG" id="COG2723">
    <property type="taxonomic scope" value="Bacteria"/>
</dbReference>
<dbReference type="HOGENOM" id="CLU_001859_1_3_9"/>
<dbReference type="UniPathway" id="UPA00542">
    <property type="reaction ID" value="UER00605"/>
</dbReference>
<dbReference type="Proteomes" id="UP000001131">
    <property type="component" value="Chromosome"/>
</dbReference>
<dbReference type="GO" id="GO:0005829">
    <property type="term" value="C:cytosol"/>
    <property type="evidence" value="ECO:0007669"/>
    <property type="project" value="TreeGrafter"/>
</dbReference>
<dbReference type="GO" id="GO:0033920">
    <property type="term" value="F:6-phospho-beta-galactosidase activity"/>
    <property type="evidence" value="ECO:0007669"/>
    <property type="project" value="UniProtKB-UniRule"/>
</dbReference>
<dbReference type="GO" id="GO:0008422">
    <property type="term" value="F:beta-glucosidase activity"/>
    <property type="evidence" value="ECO:0007669"/>
    <property type="project" value="TreeGrafter"/>
</dbReference>
<dbReference type="GO" id="GO:0019512">
    <property type="term" value="P:lactose catabolic process via tagatose-6-phosphate"/>
    <property type="evidence" value="ECO:0007669"/>
    <property type="project" value="InterPro"/>
</dbReference>
<dbReference type="FunFam" id="3.20.20.80:FF:000004">
    <property type="entry name" value="Beta-glucosidase 6-phospho-beta-glucosidase"/>
    <property type="match status" value="1"/>
</dbReference>
<dbReference type="Gene3D" id="3.20.20.80">
    <property type="entry name" value="Glycosidases"/>
    <property type="match status" value="1"/>
</dbReference>
<dbReference type="HAMAP" id="MF_01574">
    <property type="entry name" value="LacG"/>
    <property type="match status" value="1"/>
</dbReference>
<dbReference type="InterPro" id="IPR005928">
    <property type="entry name" value="6P-beta-galactosidase"/>
</dbReference>
<dbReference type="InterPro" id="IPR001360">
    <property type="entry name" value="Glyco_hydro_1"/>
</dbReference>
<dbReference type="InterPro" id="IPR018120">
    <property type="entry name" value="Glyco_hydro_1_AS"/>
</dbReference>
<dbReference type="InterPro" id="IPR033132">
    <property type="entry name" value="Glyco_hydro_1_N_CS"/>
</dbReference>
<dbReference type="InterPro" id="IPR017853">
    <property type="entry name" value="Glycoside_hydrolase_SF"/>
</dbReference>
<dbReference type="NCBIfam" id="TIGR01233">
    <property type="entry name" value="lacG"/>
    <property type="match status" value="1"/>
</dbReference>
<dbReference type="NCBIfam" id="NF010036">
    <property type="entry name" value="PRK13511.1"/>
    <property type="match status" value="1"/>
</dbReference>
<dbReference type="PANTHER" id="PTHR10353">
    <property type="entry name" value="GLYCOSYL HYDROLASE"/>
    <property type="match status" value="1"/>
</dbReference>
<dbReference type="PANTHER" id="PTHR10353:SF36">
    <property type="entry name" value="LP05116P"/>
    <property type="match status" value="1"/>
</dbReference>
<dbReference type="Pfam" id="PF00232">
    <property type="entry name" value="Glyco_hydro_1"/>
    <property type="match status" value="1"/>
</dbReference>
<dbReference type="PRINTS" id="PR00131">
    <property type="entry name" value="GLHYDRLASE1"/>
</dbReference>
<dbReference type="SUPFAM" id="SSF51445">
    <property type="entry name" value="(Trans)glycosidases"/>
    <property type="match status" value="1"/>
</dbReference>
<dbReference type="PROSITE" id="PS00572">
    <property type="entry name" value="GLYCOSYL_HYDROL_F1_1"/>
    <property type="match status" value="1"/>
</dbReference>
<dbReference type="PROSITE" id="PS00653">
    <property type="entry name" value="GLYCOSYL_HYDROL_F1_2"/>
    <property type="match status" value="1"/>
</dbReference>
<protein>
    <recommendedName>
        <fullName evidence="1">6-phospho-beta-galactosidase</fullName>
        <ecNumber evidence="1">3.2.1.85</ecNumber>
    </recommendedName>
    <alternativeName>
        <fullName evidence="1">Beta-D-phosphogalactoside galactohydrolase</fullName>
        <shortName evidence="1">PGALase</shortName>
    </alternativeName>
    <alternativeName>
        <fullName evidence="1">P-beta-Gal</fullName>
        <shortName evidence="1">PBG</shortName>
    </alternativeName>
</protein>